<dbReference type="EC" id="1.3.1.91" evidence="4"/>
<dbReference type="EC" id="1.3.1.-" evidence="1"/>
<dbReference type="EMBL" id="X91816">
    <property type="protein sequence ID" value="CAA62924.1"/>
    <property type="molecule type" value="Genomic_DNA"/>
</dbReference>
<dbReference type="EMBL" id="Z71630">
    <property type="protein sequence ID" value="CAA96293.1"/>
    <property type="molecule type" value="Genomic_DNA"/>
</dbReference>
<dbReference type="EMBL" id="Z71631">
    <property type="protein sequence ID" value="CAA96295.1"/>
    <property type="molecule type" value="Genomic_DNA"/>
</dbReference>
<dbReference type="EMBL" id="BK006947">
    <property type="protein sequence ID" value="DAA10556.1"/>
    <property type="molecule type" value="Genomic_DNA"/>
</dbReference>
<dbReference type="PIR" id="S63345">
    <property type="entry name" value="S63345"/>
</dbReference>
<dbReference type="RefSeq" id="NP_014412.1">
    <property type="nucleotide sequence ID" value="NM_001183192.1"/>
</dbReference>
<dbReference type="SMR" id="P53720"/>
<dbReference type="BioGRID" id="35840">
    <property type="interactions" value="85"/>
</dbReference>
<dbReference type="DIP" id="DIP-4102N"/>
<dbReference type="FunCoup" id="P53720">
    <property type="interactions" value="961"/>
</dbReference>
<dbReference type="STRING" id="4932.YNR015W"/>
<dbReference type="iPTMnet" id="P53720"/>
<dbReference type="PaxDb" id="4932-YNR015W"/>
<dbReference type="PeptideAtlas" id="P53720"/>
<dbReference type="EnsemblFungi" id="YNR015W_mRNA">
    <property type="protein sequence ID" value="YNR015W"/>
    <property type="gene ID" value="YNR015W"/>
</dbReference>
<dbReference type="GeneID" id="855749"/>
<dbReference type="KEGG" id="sce:YNR015W"/>
<dbReference type="AGR" id="SGD:S000005298"/>
<dbReference type="SGD" id="S000005298">
    <property type="gene designation" value="SMM1"/>
</dbReference>
<dbReference type="VEuPathDB" id="FungiDB:YNR015W"/>
<dbReference type="eggNOG" id="KOG2334">
    <property type="taxonomic scope" value="Eukaryota"/>
</dbReference>
<dbReference type="GeneTree" id="ENSGT00550000075019"/>
<dbReference type="HOGENOM" id="CLU_013299_3_2_1"/>
<dbReference type="InParanoid" id="P53720"/>
<dbReference type="OMA" id="DESYTMT"/>
<dbReference type="OrthoDB" id="10262250at2759"/>
<dbReference type="BioCyc" id="MetaCyc:G3O-33331-MONOMER"/>
<dbReference type="BioCyc" id="YEAST:G3O-33331-MONOMER"/>
<dbReference type="BRENDA" id="1.3.1.91">
    <property type="organism ID" value="984"/>
</dbReference>
<dbReference type="BioGRID-ORCS" id="855749">
    <property type="hits" value="7 hits in 10 CRISPR screens"/>
</dbReference>
<dbReference type="PRO" id="PR:P53720"/>
<dbReference type="Proteomes" id="UP000002311">
    <property type="component" value="Chromosome XIV"/>
</dbReference>
<dbReference type="RNAct" id="P53720">
    <property type="molecule type" value="protein"/>
</dbReference>
<dbReference type="GO" id="GO:0005737">
    <property type="term" value="C:cytoplasm"/>
    <property type="evidence" value="ECO:0007005"/>
    <property type="project" value="SGD"/>
</dbReference>
<dbReference type="GO" id="GO:0005634">
    <property type="term" value="C:nucleus"/>
    <property type="evidence" value="ECO:0007005"/>
    <property type="project" value="SGD"/>
</dbReference>
<dbReference type="GO" id="GO:0050660">
    <property type="term" value="F:flavin adenine dinucleotide binding"/>
    <property type="evidence" value="ECO:0007669"/>
    <property type="project" value="InterPro"/>
</dbReference>
<dbReference type="GO" id="GO:0106414">
    <property type="term" value="F:mRNA dihydrouridine synthase activity"/>
    <property type="evidence" value="ECO:0007669"/>
    <property type="project" value="RHEA"/>
</dbReference>
<dbReference type="GO" id="GO:0017150">
    <property type="term" value="F:tRNA dihydrouridine synthase activity"/>
    <property type="evidence" value="ECO:0000314"/>
    <property type="project" value="SGD"/>
</dbReference>
<dbReference type="GO" id="GO:0102264">
    <property type="term" value="F:tRNA-dihydrouridine20 synthase activity"/>
    <property type="evidence" value="ECO:0000315"/>
    <property type="project" value="FlyBase"/>
</dbReference>
<dbReference type="GO" id="GO:0006397">
    <property type="term" value="P:mRNA processing"/>
    <property type="evidence" value="ECO:0007669"/>
    <property type="project" value="UniProtKB-KW"/>
</dbReference>
<dbReference type="GO" id="GO:0002943">
    <property type="term" value="P:tRNA dihydrouridine synthesis"/>
    <property type="evidence" value="ECO:0000318"/>
    <property type="project" value="GO_Central"/>
</dbReference>
<dbReference type="GO" id="GO:0006400">
    <property type="term" value="P:tRNA modification"/>
    <property type="evidence" value="ECO:0000314"/>
    <property type="project" value="SGD"/>
</dbReference>
<dbReference type="GO" id="GO:0008033">
    <property type="term" value="P:tRNA processing"/>
    <property type="evidence" value="ECO:0000316"/>
    <property type="project" value="SGD"/>
</dbReference>
<dbReference type="CDD" id="cd02801">
    <property type="entry name" value="DUS_like_FMN"/>
    <property type="match status" value="1"/>
</dbReference>
<dbReference type="FunFam" id="3.20.20.70:FF:000280">
    <property type="entry name" value="tRNA-dihydrouridine synthase"/>
    <property type="match status" value="1"/>
</dbReference>
<dbReference type="Gene3D" id="3.20.20.70">
    <property type="entry name" value="Aldolase class I"/>
    <property type="match status" value="1"/>
</dbReference>
<dbReference type="InterPro" id="IPR013785">
    <property type="entry name" value="Aldolase_TIM"/>
</dbReference>
<dbReference type="InterPro" id="IPR035587">
    <property type="entry name" value="DUS-like_FMN-bd"/>
</dbReference>
<dbReference type="InterPro" id="IPR001269">
    <property type="entry name" value="DUS_fam"/>
</dbReference>
<dbReference type="InterPro" id="IPR052582">
    <property type="entry name" value="tRNA-DUS-like"/>
</dbReference>
<dbReference type="InterPro" id="IPR018517">
    <property type="entry name" value="tRNA_hU_synthase_CS"/>
</dbReference>
<dbReference type="PANTHER" id="PTHR45936">
    <property type="entry name" value="TRNA-DIHYDROURIDINE(20) SYNTHASE [NAD(P)+]-LIKE"/>
    <property type="match status" value="1"/>
</dbReference>
<dbReference type="PANTHER" id="PTHR45936:SF1">
    <property type="entry name" value="TRNA-DIHYDROURIDINE(20) SYNTHASE [NAD(P)+]-LIKE"/>
    <property type="match status" value="1"/>
</dbReference>
<dbReference type="Pfam" id="PF01207">
    <property type="entry name" value="Dus"/>
    <property type="match status" value="1"/>
</dbReference>
<dbReference type="PIRSF" id="PIRSF006621">
    <property type="entry name" value="Dus"/>
    <property type="match status" value="1"/>
</dbReference>
<dbReference type="SUPFAM" id="SSF51395">
    <property type="entry name" value="FMN-linked oxidoreductases"/>
    <property type="match status" value="1"/>
</dbReference>
<dbReference type="PROSITE" id="PS01136">
    <property type="entry name" value="UPF0034"/>
    <property type="match status" value="1"/>
</dbReference>
<keyword id="KW-0963">Cytoplasm</keyword>
<keyword id="KW-0285">Flavoprotein</keyword>
<keyword id="KW-0288">FMN</keyword>
<keyword id="KW-0325">Glycoprotein</keyword>
<keyword id="KW-0507">mRNA processing</keyword>
<keyword id="KW-0520">NAD</keyword>
<keyword id="KW-0521">NADP</keyword>
<keyword id="KW-0539">Nucleus</keyword>
<keyword id="KW-0560">Oxidoreductase</keyword>
<keyword id="KW-1185">Reference proteome</keyword>
<keyword id="KW-0819">tRNA processing</keyword>
<accession>P53720</accession>
<accession>D6W1J0</accession>
<organism>
    <name type="scientific">Saccharomyces cerevisiae (strain ATCC 204508 / S288c)</name>
    <name type="common">Baker's yeast</name>
    <dbReference type="NCBI Taxonomy" id="559292"/>
    <lineage>
        <taxon>Eukaryota</taxon>
        <taxon>Fungi</taxon>
        <taxon>Dikarya</taxon>
        <taxon>Ascomycota</taxon>
        <taxon>Saccharomycotina</taxon>
        <taxon>Saccharomycetes</taxon>
        <taxon>Saccharomycetales</taxon>
        <taxon>Saccharomycetaceae</taxon>
        <taxon>Saccharomyces</taxon>
    </lineage>
</organism>
<comment type="function">
    <text evidence="1 4 7">Catalyzes the NADPH-dependent synthesis of dihydrouridine, a modified base found in the D-loop of most tRNAs (PubMed:12003496, PubMed:14970222). Specifically modifies U20 in cytoplasmic tRNAs (PubMed:12003496, PubMed:14970222). Also able to mediate dihydrouridylation of some mRNAs, thereby affecting their translation (By similarity).</text>
</comment>
<comment type="catalytic activity">
    <reaction evidence="4">
        <text>5,6-dihydrouridine(20) in tRNA + NADP(+) = uridine(20) in tRNA + NADPH + H(+)</text>
        <dbReference type="Rhea" id="RHEA:53336"/>
        <dbReference type="Rhea" id="RHEA-COMP:13533"/>
        <dbReference type="Rhea" id="RHEA-COMP:13534"/>
        <dbReference type="ChEBI" id="CHEBI:15378"/>
        <dbReference type="ChEBI" id="CHEBI:57783"/>
        <dbReference type="ChEBI" id="CHEBI:58349"/>
        <dbReference type="ChEBI" id="CHEBI:65315"/>
        <dbReference type="ChEBI" id="CHEBI:74443"/>
        <dbReference type="EC" id="1.3.1.91"/>
    </reaction>
    <physiologicalReaction direction="right-to-left" evidence="4">
        <dbReference type="Rhea" id="RHEA:53338"/>
    </physiologicalReaction>
</comment>
<comment type="catalytic activity">
    <reaction evidence="4">
        <text>5,6-dihydrouridine(20) in tRNA + NAD(+) = uridine(20) in tRNA + NADH + H(+)</text>
        <dbReference type="Rhea" id="RHEA:53340"/>
        <dbReference type="Rhea" id="RHEA-COMP:13533"/>
        <dbReference type="Rhea" id="RHEA-COMP:13534"/>
        <dbReference type="ChEBI" id="CHEBI:15378"/>
        <dbReference type="ChEBI" id="CHEBI:57540"/>
        <dbReference type="ChEBI" id="CHEBI:57945"/>
        <dbReference type="ChEBI" id="CHEBI:65315"/>
        <dbReference type="ChEBI" id="CHEBI:74443"/>
        <dbReference type="EC" id="1.3.1.91"/>
    </reaction>
    <physiologicalReaction direction="right-to-left" evidence="4">
        <dbReference type="Rhea" id="RHEA:53342"/>
    </physiologicalReaction>
</comment>
<comment type="catalytic activity">
    <reaction evidence="1">
        <text>a 5,6-dihydrouridine in mRNA + NAD(+) = a uridine in mRNA + NADH + H(+)</text>
        <dbReference type="Rhea" id="RHEA:69851"/>
        <dbReference type="Rhea" id="RHEA-COMP:14658"/>
        <dbReference type="Rhea" id="RHEA-COMP:17789"/>
        <dbReference type="ChEBI" id="CHEBI:15378"/>
        <dbReference type="ChEBI" id="CHEBI:57540"/>
        <dbReference type="ChEBI" id="CHEBI:57945"/>
        <dbReference type="ChEBI" id="CHEBI:65315"/>
        <dbReference type="ChEBI" id="CHEBI:74443"/>
    </reaction>
    <physiologicalReaction direction="right-to-left" evidence="1">
        <dbReference type="Rhea" id="RHEA:69853"/>
    </physiologicalReaction>
</comment>
<comment type="catalytic activity">
    <reaction evidence="1">
        <text>a 5,6-dihydrouridine in mRNA + NADP(+) = a uridine in mRNA + NADPH + H(+)</text>
        <dbReference type="Rhea" id="RHEA:69855"/>
        <dbReference type="Rhea" id="RHEA-COMP:14658"/>
        <dbReference type="Rhea" id="RHEA-COMP:17789"/>
        <dbReference type="ChEBI" id="CHEBI:15378"/>
        <dbReference type="ChEBI" id="CHEBI:57783"/>
        <dbReference type="ChEBI" id="CHEBI:58349"/>
        <dbReference type="ChEBI" id="CHEBI:65315"/>
        <dbReference type="ChEBI" id="CHEBI:74443"/>
    </reaction>
    <physiologicalReaction direction="right-to-left" evidence="1">
        <dbReference type="Rhea" id="RHEA:69857"/>
    </physiologicalReaction>
</comment>
<comment type="cofactor">
    <cofactor evidence="2">
        <name>FMN</name>
        <dbReference type="ChEBI" id="CHEBI:58210"/>
    </cofactor>
</comment>
<comment type="subunit">
    <text>Monomer.</text>
</comment>
<comment type="subcellular location">
    <subcellularLocation>
        <location evidence="5">Cytoplasm</location>
    </subcellularLocation>
    <subcellularLocation>
        <location evidence="5">Nucleus</location>
    </subcellularLocation>
</comment>
<comment type="PTM">
    <text evidence="8">N-glycosylated.</text>
</comment>
<comment type="miscellaneous">
    <text evidence="6">Present with 2650 molecules/cell in log phase SD medium.</text>
</comment>
<comment type="similarity">
    <text evidence="10">Belongs to the Dus family. Dus2 subfamily.</text>
</comment>
<reference key="1">
    <citation type="submission" date="1996-09" db="EMBL/GenBank/DDBJ databases">
        <title>Identification of three nuclear genes which in high copy number suppress a mitochondrial mutation in the tRNA(Asp) gene in Saccharomyces cerevisiae.</title>
        <authorList>
            <person name="Rinaldi T."/>
            <person name="Lande R."/>
            <person name="Bolotin-Fukuhara M."/>
            <person name="Frontali L."/>
        </authorList>
    </citation>
    <scope>NUCLEOTIDE SEQUENCE [GENOMIC DNA]</scope>
    <source>
        <strain>R100</strain>
    </source>
</reference>
<reference key="2">
    <citation type="journal article" date="1997" name="Nature">
        <title>The nucleotide sequence of Saccharomyces cerevisiae chromosome XIV and its evolutionary implications.</title>
        <authorList>
            <person name="Philippsen P."/>
            <person name="Kleine K."/>
            <person name="Poehlmann R."/>
            <person name="Duesterhoeft A."/>
            <person name="Hamberg K."/>
            <person name="Hegemann J.H."/>
            <person name="Obermaier B."/>
            <person name="Urrestarazu L.A."/>
            <person name="Aert R."/>
            <person name="Albermann K."/>
            <person name="Altmann R."/>
            <person name="Andre B."/>
            <person name="Baladron V."/>
            <person name="Ballesta J.P.G."/>
            <person name="Becam A.-M."/>
            <person name="Beinhauer J.D."/>
            <person name="Boskovic J."/>
            <person name="Buitrago M.J."/>
            <person name="Bussereau F."/>
            <person name="Coster F."/>
            <person name="Crouzet M."/>
            <person name="D'Angelo M."/>
            <person name="Dal Pero F."/>
            <person name="De Antoni A."/>
            <person name="del Rey F."/>
            <person name="Doignon F."/>
            <person name="Domdey H."/>
            <person name="Dubois E."/>
            <person name="Fiedler T.A."/>
            <person name="Fleig U."/>
            <person name="Floeth M."/>
            <person name="Fritz C."/>
            <person name="Gaillardin C."/>
            <person name="Garcia-Cantalejo J.M."/>
            <person name="Glansdorff N."/>
            <person name="Goffeau A."/>
            <person name="Gueldener U."/>
            <person name="Herbert C.J."/>
            <person name="Heumann K."/>
            <person name="Heuss-Neitzel D."/>
            <person name="Hilbert H."/>
            <person name="Hinni K."/>
            <person name="Iraqui Houssaini I."/>
            <person name="Jacquet M."/>
            <person name="Jimenez A."/>
            <person name="Jonniaux J.-L."/>
            <person name="Karpfinger-Hartl L."/>
            <person name="Lanfranchi G."/>
            <person name="Lepingle A."/>
            <person name="Levesque H."/>
            <person name="Lyck R."/>
            <person name="Maftahi M."/>
            <person name="Mallet L."/>
            <person name="Maurer C.T.C."/>
            <person name="Messenguy F."/>
            <person name="Mewes H.-W."/>
            <person name="Moestl D."/>
            <person name="Nasr F."/>
            <person name="Nicaud J.-M."/>
            <person name="Niedenthal R.K."/>
            <person name="Pandolfo D."/>
            <person name="Pierard A."/>
            <person name="Piravandi E."/>
            <person name="Planta R.J."/>
            <person name="Pohl T.M."/>
            <person name="Purnelle B."/>
            <person name="Rebischung C."/>
            <person name="Remacha M.A."/>
            <person name="Revuelta J.L."/>
            <person name="Rinke M."/>
            <person name="Saiz J.E."/>
            <person name="Sartorello F."/>
            <person name="Scherens B."/>
            <person name="Sen-Gupta M."/>
            <person name="Soler-Mira A."/>
            <person name="Urbanus J.H.M."/>
            <person name="Valle G."/>
            <person name="Van Dyck L."/>
            <person name="Verhasselt P."/>
            <person name="Vierendeels F."/>
            <person name="Vissers S."/>
            <person name="Voet M."/>
            <person name="Volckaert G."/>
            <person name="Wach A."/>
            <person name="Wambutt R."/>
            <person name="Wedler H."/>
            <person name="Zollner A."/>
            <person name="Hani J."/>
        </authorList>
    </citation>
    <scope>NUCLEOTIDE SEQUENCE [LARGE SCALE GENOMIC DNA]</scope>
    <source>
        <strain>ATCC 204508 / S288c</strain>
    </source>
</reference>
<reference key="3">
    <citation type="journal article" date="2014" name="G3 (Bethesda)">
        <title>The reference genome sequence of Saccharomyces cerevisiae: Then and now.</title>
        <authorList>
            <person name="Engel S.R."/>
            <person name="Dietrich F.S."/>
            <person name="Fisk D.G."/>
            <person name="Binkley G."/>
            <person name="Balakrishnan R."/>
            <person name="Costanzo M.C."/>
            <person name="Dwight S.S."/>
            <person name="Hitz B.C."/>
            <person name="Karra K."/>
            <person name="Nash R.S."/>
            <person name="Weng S."/>
            <person name="Wong E.D."/>
            <person name="Lloyd P."/>
            <person name="Skrzypek M.S."/>
            <person name="Miyasato S.R."/>
            <person name="Simison M."/>
            <person name="Cherry J.M."/>
        </authorList>
    </citation>
    <scope>GENOME REANNOTATION</scope>
    <source>
        <strain>ATCC 204508 / S288c</strain>
    </source>
</reference>
<reference key="4">
    <citation type="journal article" date="2002" name="RNA">
        <title>A conserved family of Saccharomyces cerevisiae synthases effects dihydrouridine modification of tRNA.</title>
        <authorList>
            <person name="Xing F."/>
            <person name="Martzen M.R."/>
            <person name="Phizicky E.M."/>
        </authorList>
    </citation>
    <scope>FUNCTION</scope>
    <scope>CATALYTIC ACTIVITY</scope>
</reference>
<reference key="5">
    <citation type="journal article" date="2003" name="Nature">
        <title>Global analysis of protein localization in budding yeast.</title>
        <authorList>
            <person name="Huh W.-K."/>
            <person name="Falvo J.V."/>
            <person name="Gerke L.C."/>
            <person name="Carroll A.S."/>
            <person name="Howson R.W."/>
            <person name="Weissman J.S."/>
            <person name="O'Shea E.K."/>
        </authorList>
    </citation>
    <scope>SUBCELLULAR LOCATION [LARGE SCALE ANALYSIS]</scope>
</reference>
<reference key="6">
    <citation type="journal article" date="2003" name="Nature">
        <title>Global analysis of protein expression in yeast.</title>
        <authorList>
            <person name="Ghaemmaghami S."/>
            <person name="Huh W.-K."/>
            <person name="Bower K."/>
            <person name="Howson R.W."/>
            <person name="Belle A."/>
            <person name="Dephoure N."/>
            <person name="O'Shea E.K."/>
            <person name="Weissman J.S."/>
        </authorList>
    </citation>
    <scope>LEVEL OF PROTEIN EXPRESSION [LARGE SCALE ANALYSIS]</scope>
</reference>
<reference key="7">
    <citation type="journal article" date="2004" name="J. Biol. Chem.">
        <title>The specificities of four yeast dihydrouridine synthases for cytoplasmic tRNAs.</title>
        <authorList>
            <person name="Xing F."/>
            <person name="Hiley S.L."/>
            <person name="Hughes T.R."/>
            <person name="Phizicky E.M."/>
        </authorList>
    </citation>
    <scope>FUNCTION</scope>
</reference>
<reference key="8">
    <citation type="journal article" date="2009" name="Mol. Syst. Biol.">
        <title>Global analysis of the glycoproteome in Saccharomyces cerevisiae reveals new roles for protein glycosylation in eukaryotes.</title>
        <authorList>
            <person name="Kung L.A."/>
            <person name="Tao S.-C."/>
            <person name="Qian J."/>
            <person name="Smith M.G."/>
            <person name="Snyder M."/>
            <person name="Zhu H."/>
        </authorList>
    </citation>
    <scope>GLYCOSYLATION [LARGE SCALE ANALYSIS]</scope>
</reference>
<name>DUS2_YEAST</name>
<gene>
    <name type="primary">SMM1</name>
    <name evidence="9" type="synonym">DUS2</name>
    <name type="ordered locus">YNR015W</name>
    <name type="ORF">N2065</name>
</gene>
<sequence length="384" mass="42816">MVTYAGKLVLAPMVRAGELPTRLMALAHGADLVWSPEIIDKKLIQCVRKENTALQTVDYVVPSKVQTRPETLVFRTYPKLESSKLIFQIGSASPALATQAALKVINDVSGIDINAGCPKHFSIHSGMGSALLRTPDTLCLILKELVKNVGNPHSKPISVKIRLLDTKQDTLQLVKRLCATGITNLTVHCRKTEMRNREQPITDYIAEIYEICQANNVSLIVNGAIRDRSHFHDLQANHWKNTNIGGMIAECAERDPTVFDHTSKPSEDGPSWVVACREFIQWATKFDNHIGNTKYMLSRIVPGKSVFFQYFARCKSPEEVSFVLKQLNDDGSAQTDPSEYLENCRAQEKALKNANAIAKQKRKQTDHIGSDTKKQKVVPLPTDI</sequence>
<feature type="chain" id="PRO_0000162154" description="tRNA-dihydrouridine(20) synthase [NAD(P)+]">
    <location>
        <begin position="1"/>
        <end position="384"/>
    </location>
</feature>
<feature type="region of interest" description="Disordered" evidence="3">
    <location>
        <begin position="359"/>
        <end position="384"/>
    </location>
</feature>
<feature type="compositionally biased region" description="Basic and acidic residues" evidence="3">
    <location>
        <begin position="363"/>
        <end position="374"/>
    </location>
</feature>
<feature type="active site" description="Proton donor" evidence="2">
    <location>
        <position position="117"/>
    </location>
</feature>
<feature type="binding site" evidence="2">
    <location>
        <begin position="12"/>
        <end position="14"/>
    </location>
    <ligand>
        <name>FMN</name>
        <dbReference type="ChEBI" id="CHEBI:58210"/>
    </ligand>
</feature>
<feature type="binding site" evidence="2">
    <location>
        <position position="88"/>
    </location>
    <ligand>
        <name>FMN</name>
        <dbReference type="ChEBI" id="CHEBI:58210"/>
    </ligand>
</feature>
<feature type="binding site" evidence="2">
    <location>
        <position position="160"/>
    </location>
    <ligand>
        <name>FMN</name>
        <dbReference type="ChEBI" id="CHEBI:58210"/>
    </ligand>
</feature>
<feature type="binding site" evidence="2">
    <location>
        <position position="188"/>
    </location>
    <ligand>
        <name>FMN</name>
        <dbReference type="ChEBI" id="CHEBI:58210"/>
    </ligand>
</feature>
<feature type="binding site" evidence="2">
    <location>
        <begin position="222"/>
        <end position="224"/>
    </location>
    <ligand>
        <name>FMN</name>
        <dbReference type="ChEBI" id="CHEBI:58210"/>
    </ligand>
</feature>
<feature type="binding site" evidence="2">
    <location>
        <begin position="249"/>
        <end position="250"/>
    </location>
    <ligand>
        <name>FMN</name>
        <dbReference type="ChEBI" id="CHEBI:58210"/>
    </ligand>
</feature>
<proteinExistence type="evidence at protein level"/>
<evidence type="ECO:0000250" key="1">
    <source>
        <dbReference type="UniProtKB" id="O74731"/>
    </source>
</evidence>
<evidence type="ECO:0000250" key="2">
    <source>
        <dbReference type="UniProtKB" id="Q5SMC7"/>
    </source>
</evidence>
<evidence type="ECO:0000256" key="3">
    <source>
        <dbReference type="SAM" id="MobiDB-lite"/>
    </source>
</evidence>
<evidence type="ECO:0000269" key="4">
    <source>
    </source>
</evidence>
<evidence type="ECO:0000269" key="5">
    <source>
    </source>
</evidence>
<evidence type="ECO:0000269" key="6">
    <source>
    </source>
</evidence>
<evidence type="ECO:0000269" key="7">
    <source>
    </source>
</evidence>
<evidence type="ECO:0000269" key="8">
    <source>
    </source>
</evidence>
<evidence type="ECO:0000303" key="9">
    <source>
    </source>
</evidence>
<evidence type="ECO:0000305" key="10"/>
<protein>
    <recommendedName>
        <fullName>tRNA-dihydrouridine(20) synthase [NAD(P)+]</fullName>
        <ecNumber evidence="4">1.3.1.91</ecNumber>
    </recommendedName>
    <alternativeName>
        <fullName evidence="10">mRNA-dihydrouridine synthase DUS2</fullName>
        <ecNumber evidence="1">1.3.1.-</ecNumber>
    </alternativeName>
    <alternativeName>
        <fullName>tRNA-dihydrouridine synthase 2</fullName>
    </alternativeName>
</protein>